<evidence type="ECO:0000250" key="1">
    <source>
        <dbReference type="UniProtKB" id="P9WQ35"/>
    </source>
</evidence>
<evidence type="ECO:0000255" key="2"/>
<evidence type="ECO:0000255" key="3">
    <source>
        <dbReference type="PROSITE-ProRule" id="PRU00099"/>
    </source>
</evidence>
<protein>
    <recommendedName>
        <fullName>Adenylate cyclase</fullName>
        <ecNumber evidence="1">4.6.1.1</ecNumber>
    </recommendedName>
    <alternativeName>
        <fullName>ATP pyrophosphate-lyase</fullName>
    </alternativeName>
    <alternativeName>
        <fullName>Adenylyl cyclase</fullName>
    </alternativeName>
</protein>
<comment type="catalytic activity">
    <reaction evidence="1">
        <text>ATP = 3',5'-cyclic AMP + diphosphate</text>
        <dbReference type="Rhea" id="RHEA:15389"/>
        <dbReference type="ChEBI" id="CHEBI:30616"/>
        <dbReference type="ChEBI" id="CHEBI:33019"/>
        <dbReference type="ChEBI" id="CHEBI:58165"/>
        <dbReference type="EC" id="4.6.1.1"/>
    </reaction>
</comment>
<comment type="cofactor">
    <cofactor evidence="1">
        <name>Mg(2+)</name>
        <dbReference type="ChEBI" id="CHEBI:18420"/>
    </cofactor>
    <cofactor evidence="1">
        <name>Mn(2+)</name>
        <dbReference type="ChEBI" id="CHEBI:29035"/>
    </cofactor>
    <text evidence="1">Binds 1 Mg(2+) ion per subunit. Is also active with manganese ions (in vitro).</text>
</comment>
<comment type="subunit">
    <text evidence="1">Homodimer. Can also exist as monomer.</text>
</comment>
<comment type="subcellular location">
    <subcellularLocation>
        <location evidence="1">Cell membrane</location>
        <topology evidence="1">Multi-pass membrane protein</topology>
    </subcellularLocation>
</comment>
<comment type="similarity">
    <text evidence="3">Belongs to the adenylyl cyclase class-4/guanylyl cyclase family.</text>
</comment>
<accession>P9WQ34</accession>
<accession>L0TA06</accession>
<accession>O06142</accession>
<accession>O30820</accession>
<accession>P0A4Y0</accession>
<feature type="chain" id="PRO_0000426845" description="Adenylate cyclase">
    <location>
        <begin position="1"/>
        <end position="443"/>
    </location>
</feature>
<feature type="transmembrane region" description="Helical" evidence="2">
    <location>
        <begin position="47"/>
        <end position="69"/>
    </location>
</feature>
<feature type="transmembrane region" description="Helical" evidence="2">
    <location>
        <begin position="74"/>
        <end position="93"/>
    </location>
</feature>
<feature type="transmembrane region" description="Helical" evidence="2">
    <location>
        <begin position="98"/>
        <end position="120"/>
    </location>
</feature>
<feature type="transmembrane region" description="Helical" evidence="2">
    <location>
        <begin position="124"/>
        <end position="143"/>
    </location>
</feature>
<feature type="transmembrane region" description="Helical" evidence="2">
    <location>
        <begin position="148"/>
        <end position="167"/>
    </location>
</feature>
<feature type="transmembrane region" description="Helical" evidence="2">
    <location>
        <begin position="180"/>
        <end position="202"/>
    </location>
</feature>
<feature type="topological domain" description="Cytoplasmic" evidence="2">
    <location>
        <begin position="203"/>
        <end position="443"/>
    </location>
</feature>
<feature type="domain" description="Guanylate cyclase" evidence="3">
    <location>
        <begin position="251"/>
        <end position="378"/>
    </location>
</feature>
<feature type="binding site" evidence="1">
    <location>
        <position position="256"/>
    </location>
    <ligand>
        <name>Mg(2+)</name>
        <dbReference type="ChEBI" id="CHEBI:18420"/>
        <note>catalytic</note>
    </ligand>
</feature>
<feature type="binding site" evidence="1">
    <location>
        <position position="300"/>
    </location>
    <ligand>
        <name>Mg(2+)</name>
        <dbReference type="ChEBI" id="CHEBI:18420"/>
        <note>catalytic</note>
    </ligand>
</feature>
<proteinExistence type="inferred from homology"/>
<keyword id="KW-0067">ATP-binding</keyword>
<keyword id="KW-0115">cAMP biosynthesis</keyword>
<keyword id="KW-1003">Cell membrane</keyword>
<keyword id="KW-0456">Lyase</keyword>
<keyword id="KW-0460">Magnesium</keyword>
<keyword id="KW-0464">Manganese</keyword>
<keyword id="KW-0472">Membrane</keyword>
<keyword id="KW-0479">Metal-binding</keyword>
<keyword id="KW-0547">Nucleotide-binding</keyword>
<keyword id="KW-1185">Reference proteome</keyword>
<keyword id="KW-0812">Transmembrane</keyword>
<keyword id="KW-1133">Transmembrane helix</keyword>
<sequence>MAARKCGAPPIAADGSTRRPDCVTAVRTQARAPTQHYAESVARRQRVLTITAWLAVVVTGSFALMQLATGAGGWYIALINVFTAVTFAIVPLLHRFGGLVAPLTFIGTAYVAIFAIGWDVGTDAGAQFFFLVAAALVVLLVGIEHTALAVGLAAVAAGLVIALEFLVPPDTGLQPPWAMSVSFVLTTVSACGVAVATVWFALRDTARAEAVMEAEHDRSEALLANMLPASIAERLKEPERNIIADKYDEASVLFADIVGFTERASSTAPADLVRFLDRLYSAFDELVDQHGLEKIKVSGDSYMVVSGVPRPRPDHTQALADFALDMTNVAAQLKDPRGNPVPLRVGLATGPVVAGVVGSRRFFYDVWGDAVNVASRMESTDSVGQIQVPDEVYERLKDDFVLRERGHINVKGKGVMRTWYLIGRKVAADPGEVRGAEPRTAGV</sequence>
<organism>
    <name type="scientific">Mycobacterium tuberculosis (strain CDC 1551 / Oshkosh)</name>
    <dbReference type="NCBI Taxonomy" id="83331"/>
    <lineage>
        <taxon>Bacteria</taxon>
        <taxon>Bacillati</taxon>
        <taxon>Actinomycetota</taxon>
        <taxon>Actinomycetes</taxon>
        <taxon>Mycobacteriales</taxon>
        <taxon>Mycobacteriaceae</taxon>
        <taxon>Mycobacterium</taxon>
        <taxon>Mycobacterium tuberculosis complex</taxon>
    </lineage>
</organism>
<dbReference type="EC" id="4.6.1.1" evidence="1"/>
<dbReference type="EMBL" id="AE000516">
    <property type="protein sequence ID" value="AAK45931.1"/>
    <property type="molecule type" value="Genomic_DNA"/>
</dbReference>
<dbReference type="PIR" id="G70558">
    <property type="entry name" value="G70558"/>
</dbReference>
<dbReference type="RefSeq" id="WP_003408035.1">
    <property type="nucleotide sequence ID" value="NZ_KK341227.1"/>
</dbReference>
<dbReference type="SMR" id="P9WQ34"/>
<dbReference type="GeneID" id="45425593"/>
<dbReference type="KEGG" id="mtc:MT1661"/>
<dbReference type="PATRIC" id="fig|83331.31.peg.1784"/>
<dbReference type="HOGENOM" id="CLU_001072_14_0_11"/>
<dbReference type="Proteomes" id="UP000001020">
    <property type="component" value="Chromosome"/>
</dbReference>
<dbReference type="GO" id="GO:0005886">
    <property type="term" value="C:plasma membrane"/>
    <property type="evidence" value="ECO:0007669"/>
    <property type="project" value="UniProtKB-SubCell"/>
</dbReference>
<dbReference type="GO" id="GO:0004016">
    <property type="term" value="F:adenylate cyclase activity"/>
    <property type="evidence" value="ECO:0007669"/>
    <property type="project" value="UniProtKB-EC"/>
</dbReference>
<dbReference type="GO" id="GO:0005524">
    <property type="term" value="F:ATP binding"/>
    <property type="evidence" value="ECO:0007669"/>
    <property type="project" value="UniProtKB-KW"/>
</dbReference>
<dbReference type="GO" id="GO:0004383">
    <property type="term" value="F:guanylate cyclase activity"/>
    <property type="evidence" value="ECO:0007669"/>
    <property type="project" value="TreeGrafter"/>
</dbReference>
<dbReference type="GO" id="GO:0046872">
    <property type="term" value="F:metal ion binding"/>
    <property type="evidence" value="ECO:0007669"/>
    <property type="project" value="UniProtKB-KW"/>
</dbReference>
<dbReference type="GO" id="GO:0001653">
    <property type="term" value="F:peptide receptor activity"/>
    <property type="evidence" value="ECO:0007669"/>
    <property type="project" value="TreeGrafter"/>
</dbReference>
<dbReference type="GO" id="GO:0006171">
    <property type="term" value="P:cAMP biosynthetic process"/>
    <property type="evidence" value="ECO:0007669"/>
    <property type="project" value="UniProtKB-KW"/>
</dbReference>
<dbReference type="GO" id="GO:0035556">
    <property type="term" value="P:intracellular signal transduction"/>
    <property type="evidence" value="ECO:0007669"/>
    <property type="project" value="InterPro"/>
</dbReference>
<dbReference type="GO" id="GO:0007168">
    <property type="term" value="P:receptor guanylyl cyclase signaling pathway"/>
    <property type="evidence" value="ECO:0007669"/>
    <property type="project" value="TreeGrafter"/>
</dbReference>
<dbReference type="CDD" id="cd07302">
    <property type="entry name" value="CHD"/>
    <property type="match status" value="1"/>
</dbReference>
<dbReference type="FunFam" id="3.30.70.1230:FF:000033">
    <property type="entry name" value="Adenylate cyclase"/>
    <property type="match status" value="1"/>
</dbReference>
<dbReference type="Gene3D" id="3.30.70.1230">
    <property type="entry name" value="Nucleotide cyclase"/>
    <property type="match status" value="1"/>
</dbReference>
<dbReference type="InterPro" id="IPR001054">
    <property type="entry name" value="A/G_cyclase"/>
</dbReference>
<dbReference type="InterPro" id="IPR018297">
    <property type="entry name" value="A/G_cyclase_CS"/>
</dbReference>
<dbReference type="InterPro" id="IPR050401">
    <property type="entry name" value="Cyclic_nucleotide_synthase"/>
</dbReference>
<dbReference type="InterPro" id="IPR048432">
    <property type="entry name" value="MASE7"/>
</dbReference>
<dbReference type="InterPro" id="IPR029787">
    <property type="entry name" value="Nucleotide_cyclase"/>
</dbReference>
<dbReference type="PANTHER" id="PTHR11920:SF335">
    <property type="entry name" value="GUANYLATE CYCLASE"/>
    <property type="match status" value="1"/>
</dbReference>
<dbReference type="PANTHER" id="PTHR11920">
    <property type="entry name" value="GUANYLYL CYCLASE"/>
    <property type="match status" value="1"/>
</dbReference>
<dbReference type="Pfam" id="PF00211">
    <property type="entry name" value="Guanylate_cyc"/>
    <property type="match status" value="1"/>
</dbReference>
<dbReference type="Pfam" id="PF20967">
    <property type="entry name" value="MASE7"/>
    <property type="match status" value="1"/>
</dbReference>
<dbReference type="SMART" id="SM00044">
    <property type="entry name" value="CYCc"/>
    <property type="match status" value="1"/>
</dbReference>
<dbReference type="SUPFAM" id="SSF55073">
    <property type="entry name" value="Nucleotide cyclase"/>
    <property type="match status" value="1"/>
</dbReference>
<dbReference type="PROSITE" id="PS00452">
    <property type="entry name" value="GUANYLATE_CYCLASE_1"/>
    <property type="match status" value="1"/>
</dbReference>
<dbReference type="PROSITE" id="PS50125">
    <property type="entry name" value="GUANYLATE_CYCLASE_2"/>
    <property type="match status" value="1"/>
</dbReference>
<gene>
    <name type="primary">cya</name>
    <name type="ordered locus">MT1661</name>
</gene>
<reference key="1">
    <citation type="journal article" date="2002" name="J. Bacteriol.">
        <title>Whole-genome comparison of Mycobacterium tuberculosis clinical and laboratory strains.</title>
        <authorList>
            <person name="Fleischmann R.D."/>
            <person name="Alland D."/>
            <person name="Eisen J.A."/>
            <person name="Carpenter L."/>
            <person name="White O."/>
            <person name="Peterson J.D."/>
            <person name="DeBoy R.T."/>
            <person name="Dodson R.J."/>
            <person name="Gwinn M.L."/>
            <person name="Haft D.H."/>
            <person name="Hickey E.K."/>
            <person name="Kolonay J.F."/>
            <person name="Nelson W.C."/>
            <person name="Umayam L.A."/>
            <person name="Ermolaeva M.D."/>
            <person name="Salzberg S.L."/>
            <person name="Delcher A."/>
            <person name="Utterback T.R."/>
            <person name="Weidman J.F."/>
            <person name="Khouri H.M."/>
            <person name="Gill J."/>
            <person name="Mikula A."/>
            <person name="Bishai W."/>
            <person name="Jacobs W.R. Jr."/>
            <person name="Venter J.C."/>
            <person name="Fraser C.M."/>
        </authorList>
    </citation>
    <scope>NUCLEOTIDE SEQUENCE [LARGE SCALE GENOMIC DNA]</scope>
    <source>
        <strain>CDC 1551 / Oshkosh</strain>
    </source>
</reference>
<name>CYA1_MYCTO</name>